<comment type="function">
    <text evidence="1">Subunit a, of the mitochondrial membrane ATP synthase complex (F(1)F(0) ATP synthase or Complex V) that produces ATP from ADP in the presence of a proton gradient across the membrane which is generated by electron transport complexes of the respiratory chain. ATP synthase complex consist of a soluble F(1) head domain - the catalytic core - and a membrane F(1) domain - the membrane proton channel. These two domains are linked by a central stalk rotating inside the F(1) region and a stationary peripheral stalk. During catalysis, ATP synthesis in the catalytic domain of F(1) is coupled via a rotary mechanism of the central stalk subunits to proton translocation. With the subunit c (ATP5MC1), forms the proton-conducting channel in the F(0) domain, that contains two crucial half-channels (inlet and outlet) that facilitate proton movement from the mitochondrial intermembrane space (IMS) into the matrix. Protons are taken up via the inlet half-channel and released through the outlet half-channel, following a Grotthuss mechanism.</text>
</comment>
<comment type="catalytic activity">
    <reaction evidence="1">
        <text>H(+)(in) = H(+)(out)</text>
        <dbReference type="Rhea" id="RHEA:34979"/>
        <dbReference type="ChEBI" id="CHEBI:15378"/>
    </reaction>
</comment>
<comment type="subunit">
    <text evidence="1">Component of the ATP synthase complex composed at least of ATP5F1A/subunit alpha, ATP5F1B/subunit beta, ATP5MC1/subunit c (homooctomer), MT-ATP6/subunit a, MT-ATP8/subunit 8, ATP5ME/subunit e, ATP5MF/subunit f, ATP5MG/subunit g, ATP5MK/subunit k, ATP5MJ/subunit j, ATP5F1C/subunit gamma, ATP5F1D/subunit delta, ATP5F1E/subunit epsilon, ATP5PF/subunit F6, ATP5PB/subunit b, ATP5PD/subunit d, ATP5PO/subunit OSCP. ATP synthase complex consists of a soluble F(1) head domain (subunits alpha(3) and beta(3)) - the catalytic core - and a membrane F(0) domain - the membrane proton channel (subunits c, a, 8, e, f, g, k and j). These two domains are linked by a central stalk (subunits gamma, delta, and epsilon) rotating inside the F1 region and a stationary peripheral stalk (subunits F6, b, d, and OSCP). Interacts with DNAJC30; interaction is direct.</text>
</comment>
<comment type="subcellular location">
    <subcellularLocation>
        <location>Mitochondrion inner membrane</location>
        <topology>Multi-pass membrane protein</topology>
    </subcellularLocation>
</comment>
<comment type="similarity">
    <text evidence="3">Belongs to the ATPase A chain family.</text>
</comment>
<accession>O03169</accession>
<sequence length="220" mass="24403">MSLNFFDQFMSPTLLGVPLIAVAMMFPWTLLPTPTNRWLNNRTLTLQNWFIGRFTNQLLQPLNTGGHKWAMILMSLNLLGLLPYTFTPTTQLSLNMGLAIPFWLATVLLGLRNQPTAALGHLLPEGTPTLLIPILIIIETISLLIRPFALGVRLTANLTAGHLLMQLIATAAFVLLPMMPTVALLTTLVLFLLTLLEIAVAMIQAYVFVLLLSLYLQENV</sequence>
<organism>
    <name type="scientific">Latimeria chalumnae</name>
    <name type="common">Coelacanth</name>
    <dbReference type="NCBI Taxonomy" id="7897"/>
    <lineage>
        <taxon>Eukaryota</taxon>
        <taxon>Metazoa</taxon>
        <taxon>Chordata</taxon>
        <taxon>Craniata</taxon>
        <taxon>Vertebrata</taxon>
        <taxon>Euteleostomi</taxon>
        <taxon>Coelacanthiformes</taxon>
        <taxon>Coelacanthidae</taxon>
        <taxon>Latimeria</taxon>
    </lineage>
</organism>
<dbReference type="EMBL" id="U82228">
    <property type="protein sequence ID" value="AAC60323.1"/>
    <property type="molecule type" value="Genomic_DNA"/>
</dbReference>
<dbReference type="PIR" id="F58892">
    <property type="entry name" value="F58892"/>
</dbReference>
<dbReference type="RefSeq" id="NP_008334.1">
    <property type="nucleotide sequence ID" value="NC_001804.1"/>
</dbReference>
<dbReference type="SMR" id="O03169"/>
<dbReference type="FunCoup" id="O03169">
    <property type="interactions" value="340"/>
</dbReference>
<dbReference type="STRING" id="7897.ENSLACP00000021810"/>
<dbReference type="Ensembl" id="ENSLACT00000024861.1">
    <property type="protein sequence ID" value="ENSLACP00000021810.1"/>
    <property type="gene ID" value="ENSLACG00000022077.1"/>
</dbReference>
<dbReference type="GeneID" id="808088"/>
<dbReference type="KEGG" id="lcm:808088"/>
<dbReference type="CTD" id="4508"/>
<dbReference type="eggNOG" id="KOG4665">
    <property type="taxonomic scope" value="Eukaryota"/>
</dbReference>
<dbReference type="GeneTree" id="ENSGT00390000005568"/>
<dbReference type="HOGENOM" id="CLU_041018_0_2_1"/>
<dbReference type="InParanoid" id="O03169"/>
<dbReference type="OMA" id="FFDQFMS"/>
<dbReference type="OrthoDB" id="5976622at2759"/>
<dbReference type="TreeFam" id="TF343395"/>
<dbReference type="Proteomes" id="UP000008672">
    <property type="component" value="Mitochondrion"/>
</dbReference>
<dbReference type="Bgee" id="ENSLACG00000022077">
    <property type="expression patterns" value="Expressed in pelvic fin and 6 other cell types or tissues"/>
</dbReference>
<dbReference type="GO" id="GO:0005743">
    <property type="term" value="C:mitochondrial inner membrane"/>
    <property type="evidence" value="ECO:0007669"/>
    <property type="project" value="UniProtKB-SubCell"/>
</dbReference>
<dbReference type="GO" id="GO:0045259">
    <property type="term" value="C:proton-transporting ATP synthase complex"/>
    <property type="evidence" value="ECO:0000250"/>
    <property type="project" value="UniProtKB"/>
</dbReference>
<dbReference type="GO" id="GO:0015252">
    <property type="term" value="F:proton channel activity"/>
    <property type="evidence" value="ECO:0000250"/>
    <property type="project" value="UniProtKB"/>
</dbReference>
<dbReference type="GO" id="GO:0046933">
    <property type="term" value="F:proton-transporting ATP synthase activity, rotational mechanism"/>
    <property type="evidence" value="ECO:0007669"/>
    <property type="project" value="TreeGrafter"/>
</dbReference>
<dbReference type="GO" id="GO:0015986">
    <property type="term" value="P:proton motive force-driven ATP synthesis"/>
    <property type="evidence" value="ECO:0000250"/>
    <property type="project" value="UniProtKB"/>
</dbReference>
<dbReference type="GO" id="GO:1902600">
    <property type="term" value="P:proton transmembrane transport"/>
    <property type="evidence" value="ECO:0000250"/>
    <property type="project" value="UniProtKB"/>
</dbReference>
<dbReference type="CDD" id="cd00310">
    <property type="entry name" value="ATP-synt_Fo_a_6"/>
    <property type="match status" value="1"/>
</dbReference>
<dbReference type="Gene3D" id="1.20.120.220">
    <property type="entry name" value="ATP synthase, F0 complex, subunit A"/>
    <property type="match status" value="1"/>
</dbReference>
<dbReference type="InterPro" id="IPR000568">
    <property type="entry name" value="ATP_synth_F0_asu"/>
</dbReference>
<dbReference type="InterPro" id="IPR023011">
    <property type="entry name" value="ATP_synth_F0_asu_AS"/>
</dbReference>
<dbReference type="InterPro" id="IPR045083">
    <property type="entry name" value="ATP_synth_F0_asu_bact/mt"/>
</dbReference>
<dbReference type="InterPro" id="IPR035908">
    <property type="entry name" value="F0_ATP_A_sf"/>
</dbReference>
<dbReference type="NCBIfam" id="TIGR01131">
    <property type="entry name" value="ATP_synt_6_or_A"/>
    <property type="match status" value="1"/>
</dbReference>
<dbReference type="PANTHER" id="PTHR11410">
    <property type="entry name" value="ATP SYNTHASE SUBUNIT A"/>
    <property type="match status" value="1"/>
</dbReference>
<dbReference type="PANTHER" id="PTHR11410:SF0">
    <property type="entry name" value="ATP SYNTHASE SUBUNIT A"/>
    <property type="match status" value="1"/>
</dbReference>
<dbReference type="Pfam" id="PF00119">
    <property type="entry name" value="ATP-synt_A"/>
    <property type="match status" value="1"/>
</dbReference>
<dbReference type="PRINTS" id="PR00123">
    <property type="entry name" value="ATPASEA"/>
</dbReference>
<dbReference type="SUPFAM" id="SSF81336">
    <property type="entry name" value="F1F0 ATP synthase subunit A"/>
    <property type="match status" value="1"/>
</dbReference>
<dbReference type="PROSITE" id="PS00449">
    <property type="entry name" value="ATPASE_A"/>
    <property type="match status" value="1"/>
</dbReference>
<feature type="chain" id="PRO_0000082130" description="ATP synthase F(0) complex subunit a">
    <location>
        <begin position="1"/>
        <end position="220"/>
    </location>
</feature>
<feature type="transmembrane region" description="Helical" evidence="2">
    <location>
        <begin position="12"/>
        <end position="32"/>
    </location>
</feature>
<feature type="transmembrane region" description="Helical" evidence="2">
    <location>
        <begin position="69"/>
        <end position="89"/>
    </location>
</feature>
<feature type="transmembrane region" description="Helical" evidence="2">
    <location>
        <begin position="91"/>
        <end position="111"/>
    </location>
</feature>
<feature type="transmembrane region" description="Helical" evidence="2">
    <location>
        <begin position="130"/>
        <end position="150"/>
    </location>
</feature>
<feature type="transmembrane region" description="Helical" evidence="2">
    <location>
        <begin position="158"/>
        <end position="178"/>
    </location>
</feature>
<feature type="transmembrane region" description="Helical" evidence="2">
    <location>
        <begin position="183"/>
        <end position="203"/>
    </location>
</feature>
<name>ATP6_LATCH</name>
<keyword id="KW-0066">ATP synthesis</keyword>
<keyword id="KW-0138">CF(0)</keyword>
<keyword id="KW-0375">Hydrogen ion transport</keyword>
<keyword id="KW-0406">Ion transport</keyword>
<keyword id="KW-0472">Membrane</keyword>
<keyword id="KW-0496">Mitochondrion</keyword>
<keyword id="KW-0999">Mitochondrion inner membrane</keyword>
<keyword id="KW-1185">Reference proteome</keyword>
<keyword id="KW-0812">Transmembrane</keyword>
<keyword id="KW-1133">Transmembrane helix</keyword>
<keyword id="KW-0813">Transport</keyword>
<reference key="1">
    <citation type="journal article" date="1997" name="Genetics">
        <title>The complete DNA sequence of the mitochondrial genome of a 'living fossil,' the coelacanth (Latimeria chalumnae).</title>
        <authorList>
            <person name="Zardoya R."/>
            <person name="Meyer A."/>
        </authorList>
    </citation>
    <scope>NUCLEOTIDE SEQUENCE [LARGE SCALE GENOMIC DNA]</scope>
</reference>
<gene>
    <name evidence="1" type="primary">MT-ATP6</name>
    <name type="synonym">ATP6</name>
    <name type="synonym">ATPASE6</name>
    <name type="synonym">MTATP6</name>
</gene>
<proteinExistence type="inferred from homology"/>
<evidence type="ECO:0000250" key="1">
    <source>
        <dbReference type="UniProtKB" id="P00846"/>
    </source>
</evidence>
<evidence type="ECO:0000255" key="2"/>
<evidence type="ECO:0000305" key="3"/>
<geneLocation type="mitochondrion"/>
<protein>
    <recommendedName>
        <fullName evidence="1">ATP synthase F(0) complex subunit a</fullName>
    </recommendedName>
    <alternativeName>
        <fullName>F-ATPase protein 6</fullName>
    </alternativeName>
    <alternativeName>
        <fullName evidence="1">Proton-conducting channel, ATP synthase F(0) complex subunit a</fullName>
    </alternativeName>
</protein>